<sequence>DVPSANANANNQRTAAAKPQANAEASS</sequence>
<feature type="peptide" id="PRO_0000044208" description="Paragonial peptide PS-1">
    <location>
        <begin position="1"/>
        <end position="27"/>
    </location>
</feature>
<feature type="region of interest" description="Disordered" evidence="1">
    <location>
        <begin position="1"/>
        <end position="27"/>
    </location>
</feature>
<feature type="compositionally biased region" description="Low complexity" evidence="1">
    <location>
        <begin position="1"/>
        <end position="17"/>
    </location>
</feature>
<feature type="sequence variant" description="In 30% of the molecules.">
    <original>V</original>
    <variation>L</variation>
    <location>
        <position position="2"/>
    </location>
</feature>
<organism>
    <name type="scientific">Drosophila funebris</name>
    <name type="common">Fruit fly</name>
    <dbReference type="NCBI Taxonomy" id="7221"/>
    <lineage>
        <taxon>Eukaryota</taxon>
        <taxon>Metazoa</taxon>
        <taxon>Ecdysozoa</taxon>
        <taxon>Arthropoda</taxon>
        <taxon>Hexapoda</taxon>
        <taxon>Insecta</taxon>
        <taxon>Pterygota</taxon>
        <taxon>Neoptera</taxon>
        <taxon>Endopterygota</taxon>
        <taxon>Diptera</taxon>
        <taxon>Brachycera</taxon>
        <taxon>Muscomorpha</taxon>
        <taxon>Ephydroidea</taxon>
        <taxon>Drosophilidae</taxon>
        <taxon>Drosophila</taxon>
    </lineage>
</organism>
<evidence type="ECO:0000256" key="1">
    <source>
        <dbReference type="SAM" id="MobiDB-lite"/>
    </source>
</evidence>
<comment type="function">
    <text>Represses female sexual receptivity and stimulates oviposition. This peptide has a low activity.</text>
</comment>
<comment type="subcellular location">
    <subcellularLocation>
        <location>Secreted</location>
    </subcellularLocation>
</comment>
<comment type="tissue specificity">
    <text>Main cells of the accessory glands of males (paragonial gland).</text>
</comment>
<dbReference type="PIR" id="A01643">
    <property type="entry name" value="PGFF1"/>
</dbReference>
<dbReference type="GO" id="GO:0005576">
    <property type="term" value="C:extracellular region"/>
    <property type="evidence" value="ECO:0007669"/>
    <property type="project" value="UniProtKB-SubCell"/>
</dbReference>
<keyword id="KW-0085">Behavior</keyword>
<keyword id="KW-0903">Direct protein sequencing</keyword>
<keyword id="KW-0964">Secreted</keyword>
<reference key="1">
    <citation type="journal article" date="1975" name="Eur. J. Biochem.">
        <title>The amino-acid sequence of a peptide (PS-1) from Drosophila funebris: a paragonial peptide from males which reduces the receptivity of the female.</title>
        <authorList>
            <person name="Baumann H."/>
            <person name="Wilson K.J."/>
            <person name="Chen P.S."/>
            <person name="Humbel R.E."/>
        </authorList>
    </citation>
    <scope>PROTEIN SEQUENCE</scope>
</reference>
<protein>
    <recommendedName>
        <fullName>Paragonial peptide PS-1</fullName>
    </recommendedName>
    <alternativeName>
        <fullName>Paragonial peptide C</fullName>
    </alternativeName>
</protein>
<proteinExistence type="evidence at protein level"/>
<gene>
    <name type="primary">PapC</name>
</gene>
<name>PPS1_DROFU</name>
<accession>P01372</accession>